<gene>
    <name evidence="1" type="primary">rpl20</name>
</gene>
<keyword id="KW-0150">Chloroplast</keyword>
<keyword id="KW-0934">Plastid</keyword>
<keyword id="KW-0687">Ribonucleoprotein</keyword>
<keyword id="KW-0689">Ribosomal protein</keyword>
<keyword id="KW-0694">RNA-binding</keyword>
<keyword id="KW-0699">rRNA-binding</keyword>
<accession>A6MME5</accession>
<proteinExistence type="inferred from homology"/>
<protein>
    <recommendedName>
        <fullName evidence="1">Large ribosomal subunit protein bL20c</fullName>
    </recommendedName>
    <alternativeName>
        <fullName evidence="2">50S ribosomal protein L20, chloroplastic</fullName>
    </alternativeName>
</protein>
<dbReference type="EMBL" id="EF380352">
    <property type="protein sequence ID" value="ABQ43283.1"/>
    <property type="molecule type" value="Genomic_DNA"/>
</dbReference>
<dbReference type="RefSeq" id="YP_001294121.1">
    <property type="nucleotide sequence ID" value="NC_009598.1"/>
</dbReference>
<dbReference type="SMR" id="A6MME5"/>
<dbReference type="GeneID" id="5236450"/>
<dbReference type="GO" id="GO:0009507">
    <property type="term" value="C:chloroplast"/>
    <property type="evidence" value="ECO:0007669"/>
    <property type="project" value="UniProtKB-SubCell"/>
</dbReference>
<dbReference type="GO" id="GO:1990904">
    <property type="term" value="C:ribonucleoprotein complex"/>
    <property type="evidence" value="ECO:0007669"/>
    <property type="project" value="UniProtKB-KW"/>
</dbReference>
<dbReference type="GO" id="GO:0005840">
    <property type="term" value="C:ribosome"/>
    <property type="evidence" value="ECO:0007669"/>
    <property type="project" value="UniProtKB-KW"/>
</dbReference>
<dbReference type="GO" id="GO:0019843">
    <property type="term" value="F:rRNA binding"/>
    <property type="evidence" value="ECO:0007669"/>
    <property type="project" value="UniProtKB-UniRule"/>
</dbReference>
<dbReference type="GO" id="GO:0003735">
    <property type="term" value="F:structural constituent of ribosome"/>
    <property type="evidence" value="ECO:0007669"/>
    <property type="project" value="InterPro"/>
</dbReference>
<dbReference type="GO" id="GO:0000027">
    <property type="term" value="P:ribosomal large subunit assembly"/>
    <property type="evidence" value="ECO:0007669"/>
    <property type="project" value="UniProtKB-UniRule"/>
</dbReference>
<dbReference type="GO" id="GO:0006412">
    <property type="term" value="P:translation"/>
    <property type="evidence" value="ECO:0007669"/>
    <property type="project" value="InterPro"/>
</dbReference>
<dbReference type="CDD" id="cd07026">
    <property type="entry name" value="Ribosomal_L20"/>
    <property type="match status" value="1"/>
</dbReference>
<dbReference type="FunFam" id="1.10.1900.20:FF:000001">
    <property type="entry name" value="50S ribosomal protein L20"/>
    <property type="match status" value="1"/>
</dbReference>
<dbReference type="Gene3D" id="6.10.160.10">
    <property type="match status" value="1"/>
</dbReference>
<dbReference type="Gene3D" id="1.10.1900.20">
    <property type="entry name" value="Ribosomal protein L20"/>
    <property type="match status" value="1"/>
</dbReference>
<dbReference type="HAMAP" id="MF_00382">
    <property type="entry name" value="Ribosomal_bL20"/>
    <property type="match status" value="1"/>
</dbReference>
<dbReference type="InterPro" id="IPR005813">
    <property type="entry name" value="Ribosomal_bL20"/>
</dbReference>
<dbReference type="InterPro" id="IPR049946">
    <property type="entry name" value="RIBOSOMAL_L20_CS"/>
</dbReference>
<dbReference type="InterPro" id="IPR035566">
    <property type="entry name" value="Ribosomal_protein_bL20_C"/>
</dbReference>
<dbReference type="NCBIfam" id="TIGR01032">
    <property type="entry name" value="rplT_bact"/>
    <property type="match status" value="1"/>
</dbReference>
<dbReference type="PANTHER" id="PTHR10986">
    <property type="entry name" value="39S RIBOSOMAL PROTEIN L20"/>
    <property type="match status" value="1"/>
</dbReference>
<dbReference type="Pfam" id="PF00453">
    <property type="entry name" value="Ribosomal_L20"/>
    <property type="match status" value="1"/>
</dbReference>
<dbReference type="PRINTS" id="PR00062">
    <property type="entry name" value="RIBOSOMALL20"/>
</dbReference>
<dbReference type="SUPFAM" id="SSF74731">
    <property type="entry name" value="Ribosomal protein L20"/>
    <property type="match status" value="1"/>
</dbReference>
<dbReference type="PROSITE" id="PS00937">
    <property type="entry name" value="RIBOSOMAL_L20"/>
    <property type="match status" value="1"/>
</dbReference>
<reference key="1">
    <citation type="journal article" date="2007" name="Mol. Phylogenet. Evol.">
        <title>Phylogenetic and evolutionary implications of complete chloroplast genome sequences of four early-diverging angiosperms: Buxus (Buxaceae), Chloranthus (Chloranthaceae), Dioscorea (Dioscoreaceae), and Illicium (Schisandraceae).</title>
        <authorList>
            <person name="Hansen D.R."/>
            <person name="Dastidar S.G."/>
            <person name="Cai Z."/>
            <person name="Penaflor C."/>
            <person name="Kuehl J.V."/>
            <person name="Boore J.L."/>
            <person name="Jansen R.K."/>
        </authorList>
    </citation>
    <scope>NUCLEOTIDE SEQUENCE [LARGE SCALE GENOMIC DNA]</scope>
</reference>
<sequence>MTRVRRGYIARRRRTKIRLFASTFRGAHSRLTRTITQQKMRALVSTHRDRGRQKINFRRLWITRINAVTRENRVSYSYSRLIHDLYKRQLLLNRKIPAQIAISNRNCLYTISSEIIK</sequence>
<geneLocation type="chloroplast"/>
<organism>
    <name type="scientific">Chloranthus spicatus</name>
    <name type="common">Chulantree</name>
    <name type="synonym">Nigrina spicata</name>
    <dbReference type="NCBI Taxonomy" id="13006"/>
    <lineage>
        <taxon>Eukaryota</taxon>
        <taxon>Viridiplantae</taxon>
        <taxon>Streptophyta</taxon>
        <taxon>Embryophyta</taxon>
        <taxon>Tracheophyta</taxon>
        <taxon>Spermatophyta</taxon>
        <taxon>Magnoliopsida</taxon>
        <taxon>Chloranthales</taxon>
        <taxon>Chloranthaceae</taxon>
        <taxon>Chloranthus</taxon>
    </lineage>
</organism>
<evidence type="ECO:0000255" key="1">
    <source>
        <dbReference type="HAMAP-Rule" id="MF_00382"/>
    </source>
</evidence>
<evidence type="ECO:0000305" key="2"/>
<feature type="chain" id="PRO_0000355494" description="Large ribosomal subunit protein bL20c">
    <location>
        <begin position="1"/>
        <end position="117"/>
    </location>
</feature>
<comment type="function">
    <text evidence="1">Binds directly to 23S ribosomal RNA and is necessary for the in vitro assembly process of the 50S ribosomal subunit. It is not involved in the protein synthesizing functions of that subunit.</text>
</comment>
<comment type="subcellular location">
    <subcellularLocation>
        <location>Plastid</location>
        <location>Chloroplast</location>
    </subcellularLocation>
</comment>
<comment type="similarity">
    <text evidence="1">Belongs to the bacterial ribosomal protein bL20 family.</text>
</comment>
<name>RK20_CHLSC</name>